<gene>
    <name evidence="1" type="primary">gcvP</name>
    <name type="ordered locus">ECSE_3166</name>
</gene>
<sequence>MTQTLSQLENSGAFIERHIGPDAAQQQEMLNAVGAQSLNALTGQIVPKDIQLATPPQVGAPATEYAALAELKAIASRNKRFTSYIGMGYTAVQLPPVILRNMLENPGWYTAYTPYQPEVSQGRLEALLNFQQVTLDLTGLDMASASLLDEATAAAEAMAMAKRVSKLKNANRFFVASDVHPQTLDVVRTRAETFGFEVIVDDAQKVLDHQDVFGVLLQQVGTTGEIHDYTALISELKSRKIVVSVAADIMALVLLTAPGKQGADIVFGSAQRFGVPMGYGGPHAAFFAAKDEYKRSMPGRIIGVSKDAAGNTALRMAMQTREQHIRREKANSNICTSQVLLANIASLYAVYHGPIGLKRIANRIHRLTDILAAGLQQKGLKLRHAHYFDTLCVEVADKAGVLTRAEAAEINLRSDILNAVGITLDETTTRENVMQLFNVLLGDNHGLDIDTLDKDVAHDSRSIQPAMLRDDEILTHPVFNRYHSETEMMRYMHSLERKDLALNQAMIPLGSCTMKLNAAAEMIPITWPEFAELHPFCPPEQAEGYQQMIAQLADWLVKLTGYDAVCMQPNSGAQGEYAGLLAIRHYHESRNEGHRDICLIPASAHGTNPASAHMAGMQVVVVACDKNGNIDLTDLRAKAEQAGDNLSCIMVTYPSTHGVYEETIREVCEVVHQFGGQVYLDGANMNAQVGITSPGFIGADVSHLNLHKTFCIPHGGGGPGMGPIGVKAHLAPFVPGHSVVQIEGMLTRQGAVSAAPFGSASILPISWMYIRMMGAEGLKKASQVAILNANYIASRLQDAFPVLYTGRDGRVAHECILDIRPLKEETGISELDIAKRLIDYGFHAPTMSFPVAGTLMVEPTESESKVELDRFIDAMLAIRAEIDQVKAGVWPLEDNPLVNAPHIQNELVAEWAHPYSREVAVFPAGVADKYWPTVKRLDDVYGDRNLFCSCVPISEYQ</sequence>
<protein>
    <recommendedName>
        <fullName evidence="1">Glycine dehydrogenase (decarboxylating)</fullName>
        <ecNumber evidence="1">1.4.4.2</ecNumber>
    </recommendedName>
    <alternativeName>
        <fullName evidence="1">Glycine cleavage system P-protein</fullName>
    </alternativeName>
    <alternativeName>
        <fullName evidence="1">Glycine decarboxylase</fullName>
    </alternativeName>
    <alternativeName>
        <fullName evidence="1">Glycine dehydrogenase (aminomethyl-transferring)</fullName>
    </alternativeName>
</protein>
<comment type="function">
    <text evidence="1">The glycine cleavage system catalyzes the degradation of glycine. The P protein binds the alpha-amino group of glycine through its pyridoxal phosphate cofactor; CO(2) is released and the remaining methylamine moiety is then transferred to the lipoamide cofactor of the H protein.</text>
</comment>
<comment type="catalytic activity">
    <reaction evidence="1">
        <text>N(6)-[(R)-lipoyl]-L-lysyl-[glycine-cleavage complex H protein] + glycine + H(+) = N(6)-[(R)-S(8)-aminomethyldihydrolipoyl]-L-lysyl-[glycine-cleavage complex H protein] + CO2</text>
        <dbReference type="Rhea" id="RHEA:24304"/>
        <dbReference type="Rhea" id="RHEA-COMP:10494"/>
        <dbReference type="Rhea" id="RHEA-COMP:10495"/>
        <dbReference type="ChEBI" id="CHEBI:15378"/>
        <dbReference type="ChEBI" id="CHEBI:16526"/>
        <dbReference type="ChEBI" id="CHEBI:57305"/>
        <dbReference type="ChEBI" id="CHEBI:83099"/>
        <dbReference type="ChEBI" id="CHEBI:83143"/>
        <dbReference type="EC" id="1.4.4.2"/>
    </reaction>
</comment>
<comment type="cofactor">
    <cofactor evidence="1">
        <name>pyridoxal 5'-phosphate</name>
        <dbReference type="ChEBI" id="CHEBI:597326"/>
    </cofactor>
</comment>
<comment type="subunit">
    <text evidence="1">The glycine cleavage system is composed of four proteins: P, T, L and H.</text>
</comment>
<comment type="similarity">
    <text evidence="1">Belongs to the GcvP family.</text>
</comment>
<organism>
    <name type="scientific">Escherichia coli (strain SE11)</name>
    <dbReference type="NCBI Taxonomy" id="409438"/>
    <lineage>
        <taxon>Bacteria</taxon>
        <taxon>Pseudomonadati</taxon>
        <taxon>Pseudomonadota</taxon>
        <taxon>Gammaproteobacteria</taxon>
        <taxon>Enterobacterales</taxon>
        <taxon>Enterobacteriaceae</taxon>
        <taxon>Escherichia</taxon>
    </lineage>
</organism>
<keyword id="KW-0560">Oxidoreductase</keyword>
<keyword id="KW-0663">Pyridoxal phosphate</keyword>
<proteinExistence type="inferred from homology"/>
<evidence type="ECO:0000255" key="1">
    <source>
        <dbReference type="HAMAP-Rule" id="MF_00711"/>
    </source>
</evidence>
<feature type="chain" id="PRO_1000132440" description="Glycine dehydrogenase (decarboxylating)">
    <location>
        <begin position="1"/>
        <end position="957"/>
    </location>
</feature>
<feature type="modified residue" description="N6-(pyridoxal phosphate)lysine" evidence="1">
    <location>
        <position position="708"/>
    </location>
</feature>
<dbReference type="EC" id="1.4.4.2" evidence="1"/>
<dbReference type="EMBL" id="AP009240">
    <property type="protein sequence ID" value="BAG78690.1"/>
    <property type="molecule type" value="Genomic_DNA"/>
</dbReference>
<dbReference type="RefSeq" id="WP_000195023.1">
    <property type="nucleotide sequence ID" value="NC_011415.1"/>
</dbReference>
<dbReference type="SMR" id="B6I736"/>
<dbReference type="KEGG" id="ecy:ECSE_3166"/>
<dbReference type="HOGENOM" id="CLU_004620_1_1_6"/>
<dbReference type="Proteomes" id="UP000008199">
    <property type="component" value="Chromosome"/>
</dbReference>
<dbReference type="GO" id="GO:0005829">
    <property type="term" value="C:cytosol"/>
    <property type="evidence" value="ECO:0007669"/>
    <property type="project" value="TreeGrafter"/>
</dbReference>
<dbReference type="GO" id="GO:0005960">
    <property type="term" value="C:glycine cleavage complex"/>
    <property type="evidence" value="ECO:0007669"/>
    <property type="project" value="TreeGrafter"/>
</dbReference>
<dbReference type="GO" id="GO:0016594">
    <property type="term" value="F:glycine binding"/>
    <property type="evidence" value="ECO:0007669"/>
    <property type="project" value="TreeGrafter"/>
</dbReference>
<dbReference type="GO" id="GO:0004375">
    <property type="term" value="F:glycine dehydrogenase (decarboxylating) activity"/>
    <property type="evidence" value="ECO:0007669"/>
    <property type="project" value="UniProtKB-EC"/>
</dbReference>
<dbReference type="GO" id="GO:0030170">
    <property type="term" value="F:pyridoxal phosphate binding"/>
    <property type="evidence" value="ECO:0007669"/>
    <property type="project" value="TreeGrafter"/>
</dbReference>
<dbReference type="GO" id="GO:0019464">
    <property type="term" value="P:glycine decarboxylation via glycine cleavage system"/>
    <property type="evidence" value="ECO:0007669"/>
    <property type="project" value="UniProtKB-UniRule"/>
</dbReference>
<dbReference type="CDD" id="cd00613">
    <property type="entry name" value="GDC-P"/>
    <property type="match status" value="2"/>
</dbReference>
<dbReference type="FunFam" id="3.40.640.10:FF:000005">
    <property type="entry name" value="Glycine dehydrogenase (decarboxylating), mitochondrial"/>
    <property type="match status" value="1"/>
</dbReference>
<dbReference type="FunFam" id="3.90.1150.10:FF:000007">
    <property type="entry name" value="Glycine dehydrogenase (decarboxylating), mitochondrial"/>
    <property type="match status" value="1"/>
</dbReference>
<dbReference type="FunFam" id="3.40.640.10:FF:000007">
    <property type="entry name" value="glycine dehydrogenase (Decarboxylating), mitochondrial"/>
    <property type="match status" value="1"/>
</dbReference>
<dbReference type="Gene3D" id="3.90.1150.10">
    <property type="entry name" value="Aspartate Aminotransferase, domain 1"/>
    <property type="match status" value="1"/>
</dbReference>
<dbReference type="Gene3D" id="3.40.640.10">
    <property type="entry name" value="Type I PLP-dependent aspartate aminotransferase-like (Major domain)"/>
    <property type="match status" value="2"/>
</dbReference>
<dbReference type="HAMAP" id="MF_00711">
    <property type="entry name" value="GcvP"/>
    <property type="match status" value="1"/>
</dbReference>
<dbReference type="InterPro" id="IPR003437">
    <property type="entry name" value="GcvP"/>
</dbReference>
<dbReference type="InterPro" id="IPR049316">
    <property type="entry name" value="GDC-P_C"/>
</dbReference>
<dbReference type="InterPro" id="IPR049315">
    <property type="entry name" value="GDC-P_N"/>
</dbReference>
<dbReference type="InterPro" id="IPR020581">
    <property type="entry name" value="GDC_P"/>
</dbReference>
<dbReference type="InterPro" id="IPR015424">
    <property type="entry name" value="PyrdxlP-dep_Trfase"/>
</dbReference>
<dbReference type="InterPro" id="IPR015421">
    <property type="entry name" value="PyrdxlP-dep_Trfase_major"/>
</dbReference>
<dbReference type="InterPro" id="IPR015422">
    <property type="entry name" value="PyrdxlP-dep_Trfase_small"/>
</dbReference>
<dbReference type="NCBIfam" id="TIGR00461">
    <property type="entry name" value="gcvP"/>
    <property type="match status" value="1"/>
</dbReference>
<dbReference type="NCBIfam" id="NF003346">
    <property type="entry name" value="PRK04366.1"/>
    <property type="match status" value="1"/>
</dbReference>
<dbReference type="PANTHER" id="PTHR11773:SF13">
    <property type="entry name" value="GLYCINE DEHYDROGENASE (DECARBOXYLATING)"/>
    <property type="match status" value="1"/>
</dbReference>
<dbReference type="PANTHER" id="PTHR11773">
    <property type="entry name" value="GLYCINE DEHYDROGENASE, DECARBOXYLATING"/>
    <property type="match status" value="1"/>
</dbReference>
<dbReference type="Pfam" id="PF21478">
    <property type="entry name" value="GcvP2_C"/>
    <property type="match status" value="1"/>
</dbReference>
<dbReference type="Pfam" id="PF02347">
    <property type="entry name" value="GDC-P"/>
    <property type="match status" value="2"/>
</dbReference>
<dbReference type="SUPFAM" id="SSF53383">
    <property type="entry name" value="PLP-dependent transferases"/>
    <property type="match status" value="2"/>
</dbReference>
<accession>B6I736</accession>
<name>GCSP_ECOSE</name>
<reference key="1">
    <citation type="journal article" date="2008" name="DNA Res.">
        <title>Complete genome sequence and comparative analysis of the wild-type commensal Escherichia coli strain SE11 isolated from a healthy adult.</title>
        <authorList>
            <person name="Oshima K."/>
            <person name="Toh H."/>
            <person name="Ogura Y."/>
            <person name="Sasamoto H."/>
            <person name="Morita H."/>
            <person name="Park S.-H."/>
            <person name="Ooka T."/>
            <person name="Iyoda S."/>
            <person name="Taylor T.D."/>
            <person name="Hayashi T."/>
            <person name="Itoh K."/>
            <person name="Hattori M."/>
        </authorList>
    </citation>
    <scope>NUCLEOTIDE SEQUENCE [LARGE SCALE GENOMIC DNA]</scope>
    <source>
        <strain>SE11</strain>
    </source>
</reference>